<dbReference type="EC" id="6.3.2.13" evidence="1"/>
<dbReference type="EMBL" id="BX571871">
    <property type="protein sequence ID" value="CAE16032.1"/>
    <property type="molecule type" value="Genomic_DNA"/>
</dbReference>
<dbReference type="RefSeq" id="WP_011147822.1">
    <property type="nucleotide sequence ID" value="NC_005126.1"/>
</dbReference>
<dbReference type="SMR" id="Q7N142"/>
<dbReference type="STRING" id="243265.plu3659"/>
<dbReference type="GeneID" id="48849902"/>
<dbReference type="KEGG" id="plu:plu3659"/>
<dbReference type="eggNOG" id="COG0769">
    <property type="taxonomic scope" value="Bacteria"/>
</dbReference>
<dbReference type="HOGENOM" id="CLU_022291_3_2_6"/>
<dbReference type="OrthoDB" id="9800958at2"/>
<dbReference type="UniPathway" id="UPA00219"/>
<dbReference type="Proteomes" id="UP000002514">
    <property type="component" value="Chromosome"/>
</dbReference>
<dbReference type="GO" id="GO:0005737">
    <property type="term" value="C:cytoplasm"/>
    <property type="evidence" value="ECO:0007669"/>
    <property type="project" value="UniProtKB-SubCell"/>
</dbReference>
<dbReference type="GO" id="GO:0005524">
    <property type="term" value="F:ATP binding"/>
    <property type="evidence" value="ECO:0007669"/>
    <property type="project" value="UniProtKB-UniRule"/>
</dbReference>
<dbReference type="GO" id="GO:0000287">
    <property type="term" value="F:magnesium ion binding"/>
    <property type="evidence" value="ECO:0007669"/>
    <property type="project" value="UniProtKB-UniRule"/>
</dbReference>
<dbReference type="GO" id="GO:0008765">
    <property type="term" value="F:UDP-N-acetylmuramoylalanyl-D-glutamate-2,6-diaminopimelate ligase activity"/>
    <property type="evidence" value="ECO:0007669"/>
    <property type="project" value="UniProtKB-UniRule"/>
</dbReference>
<dbReference type="GO" id="GO:0051301">
    <property type="term" value="P:cell division"/>
    <property type="evidence" value="ECO:0007669"/>
    <property type="project" value="UniProtKB-KW"/>
</dbReference>
<dbReference type="GO" id="GO:0071555">
    <property type="term" value="P:cell wall organization"/>
    <property type="evidence" value="ECO:0007669"/>
    <property type="project" value="UniProtKB-KW"/>
</dbReference>
<dbReference type="GO" id="GO:0009252">
    <property type="term" value="P:peptidoglycan biosynthetic process"/>
    <property type="evidence" value="ECO:0007669"/>
    <property type="project" value="UniProtKB-UniRule"/>
</dbReference>
<dbReference type="GO" id="GO:0008360">
    <property type="term" value="P:regulation of cell shape"/>
    <property type="evidence" value="ECO:0007669"/>
    <property type="project" value="UniProtKB-KW"/>
</dbReference>
<dbReference type="FunFam" id="3.40.1190.10:FF:000006">
    <property type="entry name" value="UDP-N-acetylmuramoyl-L-alanyl-D-glutamate--2,6-diaminopimelate ligase"/>
    <property type="match status" value="1"/>
</dbReference>
<dbReference type="FunFam" id="3.90.190.20:FF:000006">
    <property type="entry name" value="UDP-N-acetylmuramoyl-L-alanyl-D-glutamate--2,6-diaminopimelate ligase"/>
    <property type="match status" value="1"/>
</dbReference>
<dbReference type="Gene3D" id="3.90.190.20">
    <property type="entry name" value="Mur ligase, C-terminal domain"/>
    <property type="match status" value="1"/>
</dbReference>
<dbReference type="Gene3D" id="3.40.1190.10">
    <property type="entry name" value="Mur-like, catalytic domain"/>
    <property type="match status" value="1"/>
</dbReference>
<dbReference type="Gene3D" id="3.40.1390.10">
    <property type="entry name" value="MurE/MurF, N-terminal domain"/>
    <property type="match status" value="1"/>
</dbReference>
<dbReference type="HAMAP" id="MF_00208">
    <property type="entry name" value="MurE"/>
    <property type="match status" value="1"/>
</dbReference>
<dbReference type="InterPro" id="IPR036565">
    <property type="entry name" value="Mur-like_cat_sf"/>
</dbReference>
<dbReference type="InterPro" id="IPR004101">
    <property type="entry name" value="Mur_ligase_C"/>
</dbReference>
<dbReference type="InterPro" id="IPR036615">
    <property type="entry name" value="Mur_ligase_C_dom_sf"/>
</dbReference>
<dbReference type="InterPro" id="IPR013221">
    <property type="entry name" value="Mur_ligase_cen"/>
</dbReference>
<dbReference type="InterPro" id="IPR000713">
    <property type="entry name" value="Mur_ligase_N"/>
</dbReference>
<dbReference type="InterPro" id="IPR035911">
    <property type="entry name" value="MurE/MurF_N"/>
</dbReference>
<dbReference type="InterPro" id="IPR005761">
    <property type="entry name" value="UDP-N-AcMur-Glu-dNH2Pim_ligase"/>
</dbReference>
<dbReference type="NCBIfam" id="TIGR01085">
    <property type="entry name" value="murE"/>
    <property type="match status" value="1"/>
</dbReference>
<dbReference type="NCBIfam" id="NF001123">
    <property type="entry name" value="PRK00139.1-1"/>
    <property type="match status" value="1"/>
</dbReference>
<dbReference type="NCBIfam" id="NF001126">
    <property type="entry name" value="PRK00139.1-4"/>
    <property type="match status" value="1"/>
</dbReference>
<dbReference type="PANTHER" id="PTHR23135">
    <property type="entry name" value="MUR LIGASE FAMILY MEMBER"/>
    <property type="match status" value="1"/>
</dbReference>
<dbReference type="PANTHER" id="PTHR23135:SF4">
    <property type="entry name" value="UDP-N-ACETYLMURAMOYL-L-ALANYL-D-GLUTAMATE--2,6-DIAMINOPIMELATE LIGASE MURE HOMOLOG, CHLOROPLASTIC"/>
    <property type="match status" value="1"/>
</dbReference>
<dbReference type="Pfam" id="PF01225">
    <property type="entry name" value="Mur_ligase"/>
    <property type="match status" value="1"/>
</dbReference>
<dbReference type="Pfam" id="PF02875">
    <property type="entry name" value="Mur_ligase_C"/>
    <property type="match status" value="1"/>
</dbReference>
<dbReference type="Pfam" id="PF08245">
    <property type="entry name" value="Mur_ligase_M"/>
    <property type="match status" value="1"/>
</dbReference>
<dbReference type="SUPFAM" id="SSF53623">
    <property type="entry name" value="MurD-like peptide ligases, catalytic domain"/>
    <property type="match status" value="1"/>
</dbReference>
<dbReference type="SUPFAM" id="SSF53244">
    <property type="entry name" value="MurD-like peptide ligases, peptide-binding domain"/>
    <property type="match status" value="1"/>
</dbReference>
<dbReference type="SUPFAM" id="SSF63418">
    <property type="entry name" value="MurE/MurF N-terminal domain"/>
    <property type="match status" value="1"/>
</dbReference>
<protein>
    <recommendedName>
        <fullName evidence="1">UDP-N-acetylmuramoyl-L-alanyl-D-glutamate--2,6-diaminopimelate ligase</fullName>
        <ecNumber evidence="1">6.3.2.13</ecNumber>
    </recommendedName>
    <alternativeName>
        <fullName evidence="1">Meso-A2pm-adding enzyme</fullName>
    </alternativeName>
    <alternativeName>
        <fullName evidence="1">Meso-diaminopimelate-adding enzyme</fullName>
    </alternativeName>
    <alternativeName>
        <fullName evidence="1">UDP-MurNAc-L-Ala-D-Glu:meso-diaminopimelate ligase</fullName>
    </alternativeName>
    <alternativeName>
        <fullName evidence="1">UDP-MurNAc-tripeptide synthetase</fullName>
    </alternativeName>
    <alternativeName>
        <fullName evidence="1">UDP-N-acetylmuramyl-tripeptide synthetase</fullName>
    </alternativeName>
</protein>
<feature type="chain" id="PRO_0000101921" description="UDP-N-acetylmuramoyl-L-alanyl-D-glutamate--2,6-diaminopimelate ligase">
    <location>
        <begin position="1"/>
        <end position="495"/>
    </location>
</feature>
<feature type="short sequence motif" description="Meso-diaminopimelate recognition motif">
    <location>
        <begin position="414"/>
        <end position="417"/>
    </location>
</feature>
<feature type="binding site" evidence="1">
    <location>
        <position position="27"/>
    </location>
    <ligand>
        <name>UDP-N-acetyl-alpha-D-muramoyl-L-alanyl-D-glutamate</name>
        <dbReference type="ChEBI" id="CHEBI:83900"/>
    </ligand>
</feature>
<feature type="binding site" evidence="1">
    <location>
        <position position="29"/>
    </location>
    <ligand>
        <name>UDP-N-acetyl-alpha-D-muramoyl-L-alanyl-D-glutamate</name>
        <dbReference type="ChEBI" id="CHEBI:83900"/>
    </ligand>
</feature>
<feature type="binding site" evidence="1">
    <location>
        <begin position="44"/>
        <end position="46"/>
    </location>
    <ligand>
        <name>UDP-N-acetyl-alpha-D-muramoyl-L-alanyl-D-glutamate</name>
        <dbReference type="ChEBI" id="CHEBI:83900"/>
    </ligand>
</feature>
<feature type="binding site" evidence="1">
    <location>
        <begin position="116"/>
        <end position="122"/>
    </location>
    <ligand>
        <name>ATP</name>
        <dbReference type="ChEBI" id="CHEBI:30616"/>
    </ligand>
</feature>
<feature type="binding site" evidence="1">
    <location>
        <position position="157"/>
    </location>
    <ligand>
        <name>UDP-N-acetyl-alpha-D-muramoyl-L-alanyl-D-glutamate</name>
        <dbReference type="ChEBI" id="CHEBI:83900"/>
    </ligand>
</feature>
<feature type="binding site" evidence="1">
    <location>
        <begin position="158"/>
        <end position="159"/>
    </location>
    <ligand>
        <name>UDP-N-acetyl-alpha-D-muramoyl-L-alanyl-D-glutamate</name>
        <dbReference type="ChEBI" id="CHEBI:83900"/>
    </ligand>
</feature>
<feature type="binding site" evidence="1">
    <location>
        <position position="185"/>
    </location>
    <ligand>
        <name>UDP-N-acetyl-alpha-D-muramoyl-L-alanyl-D-glutamate</name>
        <dbReference type="ChEBI" id="CHEBI:83900"/>
    </ligand>
</feature>
<feature type="binding site" evidence="1">
    <location>
        <position position="191"/>
    </location>
    <ligand>
        <name>UDP-N-acetyl-alpha-D-muramoyl-L-alanyl-D-glutamate</name>
        <dbReference type="ChEBI" id="CHEBI:83900"/>
    </ligand>
</feature>
<feature type="binding site" evidence="1">
    <location>
        <position position="193"/>
    </location>
    <ligand>
        <name>UDP-N-acetyl-alpha-D-muramoyl-L-alanyl-D-glutamate</name>
        <dbReference type="ChEBI" id="CHEBI:83900"/>
    </ligand>
</feature>
<feature type="binding site" evidence="1">
    <location>
        <position position="390"/>
    </location>
    <ligand>
        <name>meso-2,6-diaminopimelate</name>
        <dbReference type="ChEBI" id="CHEBI:57791"/>
    </ligand>
</feature>
<feature type="binding site" evidence="1">
    <location>
        <begin position="414"/>
        <end position="417"/>
    </location>
    <ligand>
        <name>meso-2,6-diaminopimelate</name>
        <dbReference type="ChEBI" id="CHEBI:57791"/>
    </ligand>
</feature>
<feature type="binding site" evidence="1">
    <location>
        <position position="465"/>
    </location>
    <ligand>
        <name>meso-2,6-diaminopimelate</name>
        <dbReference type="ChEBI" id="CHEBI:57791"/>
    </ligand>
</feature>
<feature type="binding site" evidence="1">
    <location>
        <position position="469"/>
    </location>
    <ligand>
        <name>meso-2,6-diaminopimelate</name>
        <dbReference type="ChEBI" id="CHEBI:57791"/>
    </ligand>
</feature>
<feature type="modified residue" description="N6-carboxylysine" evidence="1">
    <location>
        <position position="225"/>
    </location>
</feature>
<reference key="1">
    <citation type="journal article" date="2003" name="Nat. Biotechnol.">
        <title>The genome sequence of the entomopathogenic bacterium Photorhabdus luminescens.</title>
        <authorList>
            <person name="Duchaud E."/>
            <person name="Rusniok C."/>
            <person name="Frangeul L."/>
            <person name="Buchrieser C."/>
            <person name="Givaudan A."/>
            <person name="Taourit S."/>
            <person name="Bocs S."/>
            <person name="Boursaux-Eude C."/>
            <person name="Chandler M."/>
            <person name="Charles J.-F."/>
            <person name="Dassa E."/>
            <person name="Derose R."/>
            <person name="Derzelle S."/>
            <person name="Freyssinet G."/>
            <person name="Gaudriault S."/>
            <person name="Medigue C."/>
            <person name="Lanois A."/>
            <person name="Powell K."/>
            <person name="Siguier P."/>
            <person name="Vincent R."/>
            <person name="Wingate V."/>
            <person name="Zouine M."/>
            <person name="Glaser P."/>
            <person name="Boemare N."/>
            <person name="Danchin A."/>
            <person name="Kunst F."/>
        </authorList>
    </citation>
    <scope>NUCLEOTIDE SEQUENCE [LARGE SCALE GENOMIC DNA]</scope>
    <source>
        <strain>DSM 15139 / CIP 105565 / TT01</strain>
    </source>
</reference>
<comment type="function">
    <text evidence="1">Catalyzes the addition of meso-diaminopimelic acid to the nucleotide precursor UDP-N-acetylmuramoyl-L-alanyl-D-glutamate (UMAG) in the biosynthesis of bacterial cell-wall peptidoglycan.</text>
</comment>
<comment type="catalytic activity">
    <reaction evidence="1">
        <text>UDP-N-acetyl-alpha-D-muramoyl-L-alanyl-D-glutamate + meso-2,6-diaminopimelate + ATP = UDP-N-acetyl-alpha-D-muramoyl-L-alanyl-gamma-D-glutamyl-meso-2,6-diaminopimelate + ADP + phosphate + H(+)</text>
        <dbReference type="Rhea" id="RHEA:23676"/>
        <dbReference type="ChEBI" id="CHEBI:15378"/>
        <dbReference type="ChEBI" id="CHEBI:30616"/>
        <dbReference type="ChEBI" id="CHEBI:43474"/>
        <dbReference type="ChEBI" id="CHEBI:57791"/>
        <dbReference type="ChEBI" id="CHEBI:83900"/>
        <dbReference type="ChEBI" id="CHEBI:83905"/>
        <dbReference type="ChEBI" id="CHEBI:456216"/>
        <dbReference type="EC" id="6.3.2.13"/>
    </reaction>
</comment>
<comment type="cofactor">
    <cofactor evidence="1">
        <name>Mg(2+)</name>
        <dbReference type="ChEBI" id="CHEBI:18420"/>
    </cofactor>
</comment>
<comment type="pathway">
    <text evidence="1">Cell wall biogenesis; peptidoglycan biosynthesis.</text>
</comment>
<comment type="subcellular location">
    <subcellularLocation>
        <location evidence="1">Cytoplasm</location>
    </subcellularLocation>
</comment>
<comment type="PTM">
    <text evidence="1">Carboxylation is probably crucial for Mg(2+) binding and, consequently, for the gamma-phosphate positioning of ATP.</text>
</comment>
<comment type="similarity">
    <text evidence="1">Belongs to the MurCDEF family. MurE subfamily.</text>
</comment>
<organism>
    <name type="scientific">Photorhabdus laumondii subsp. laumondii (strain DSM 15139 / CIP 105565 / TT01)</name>
    <name type="common">Photorhabdus luminescens subsp. laumondii</name>
    <dbReference type="NCBI Taxonomy" id="243265"/>
    <lineage>
        <taxon>Bacteria</taxon>
        <taxon>Pseudomonadati</taxon>
        <taxon>Pseudomonadota</taxon>
        <taxon>Gammaproteobacteria</taxon>
        <taxon>Enterobacterales</taxon>
        <taxon>Morganellaceae</taxon>
        <taxon>Photorhabdus</taxon>
    </lineage>
</organism>
<evidence type="ECO:0000255" key="1">
    <source>
        <dbReference type="HAMAP-Rule" id="MF_00208"/>
    </source>
</evidence>
<keyword id="KW-0067">ATP-binding</keyword>
<keyword id="KW-0131">Cell cycle</keyword>
<keyword id="KW-0132">Cell division</keyword>
<keyword id="KW-0133">Cell shape</keyword>
<keyword id="KW-0961">Cell wall biogenesis/degradation</keyword>
<keyword id="KW-0963">Cytoplasm</keyword>
<keyword id="KW-0436">Ligase</keyword>
<keyword id="KW-0460">Magnesium</keyword>
<keyword id="KW-0547">Nucleotide-binding</keyword>
<keyword id="KW-0573">Peptidoglycan synthesis</keyword>
<keyword id="KW-1185">Reference proteome</keyword>
<gene>
    <name evidence="1" type="primary">murE</name>
    <name type="ordered locus">plu3659</name>
</gene>
<proteinExistence type="inferred from homology"/>
<name>MURE_PHOLL</name>
<accession>Q7N142</accession>
<sequence>MADRNLRDLLAPLGIDAPVRELREMTLDSRKSSAGDLFVAIKGHQTDGRHYIPQAIAQGVAAVIAEAQGEVDNGTVQIMHGVPVVYVNDLNNKLSQLAGEFYCHPGDKLHLIGVTGTNGKTTTTQLLAQWSHGLGETSAVMGTVGNGLLGRVAPSENTTGSAVDIQLDLQQLVRQEATFAAMEVSSHGLVQGRVAALPFEAAVFTNLSRDHLDYHGDMEHYEAAKWLLFSTHNVKQQIINADDEIGLKWLSRLPQAVAVTMENRLPENWQGRWLAAREIKYHDKGVSITFESSWGGGTIDSSLMGAFNVSNLLLALSTLLALDYPLEKLLETASCLEPVCGRMEVFTTPGKPVVVVDYAHTPDALEKALMAARLHCQGKLWCVFGCGGDRDKGKRPLMGGVAEQLADYVIVTDDNPRNEEPQAIIADILTGFLDPGRAIAIHGRVEAVTNAIMQAKADDVVLIAGKGHEDYQLVGHRRLDYSDRLTVARLLGVIA</sequence>